<organism>
    <name type="scientific">Mycobacterium tuberculosis (strain ATCC 25177 / H37Ra)</name>
    <dbReference type="NCBI Taxonomy" id="419947"/>
    <lineage>
        <taxon>Bacteria</taxon>
        <taxon>Bacillati</taxon>
        <taxon>Actinomycetota</taxon>
        <taxon>Actinomycetes</taxon>
        <taxon>Mycobacteriales</taxon>
        <taxon>Mycobacteriaceae</taxon>
        <taxon>Mycobacterium</taxon>
        <taxon>Mycobacterium tuberculosis complex</taxon>
    </lineage>
</organism>
<name>RL15_MYCTA</name>
<dbReference type="EMBL" id="CP000611">
    <property type="protein sequence ID" value="ABQ72459.1"/>
    <property type="molecule type" value="Genomic_DNA"/>
</dbReference>
<dbReference type="RefSeq" id="WP_003898563.1">
    <property type="nucleotide sequence ID" value="NZ_CP016972.1"/>
</dbReference>
<dbReference type="PDB" id="7F0D">
    <property type="method" value="EM"/>
    <property type="resolution" value="3.30 A"/>
    <property type="chains" value="L=2-146"/>
</dbReference>
<dbReference type="PDBsum" id="7F0D"/>
<dbReference type="SMR" id="A5U0A9"/>
<dbReference type="KEGG" id="mra:MRA_0731"/>
<dbReference type="eggNOG" id="COG0200">
    <property type="taxonomic scope" value="Bacteria"/>
</dbReference>
<dbReference type="HOGENOM" id="CLU_055188_4_1_11"/>
<dbReference type="Proteomes" id="UP000001988">
    <property type="component" value="Chromosome"/>
</dbReference>
<dbReference type="GO" id="GO:0022625">
    <property type="term" value="C:cytosolic large ribosomal subunit"/>
    <property type="evidence" value="ECO:0007669"/>
    <property type="project" value="TreeGrafter"/>
</dbReference>
<dbReference type="GO" id="GO:0019843">
    <property type="term" value="F:rRNA binding"/>
    <property type="evidence" value="ECO:0007669"/>
    <property type="project" value="UniProtKB-UniRule"/>
</dbReference>
<dbReference type="GO" id="GO:0003735">
    <property type="term" value="F:structural constituent of ribosome"/>
    <property type="evidence" value="ECO:0007669"/>
    <property type="project" value="InterPro"/>
</dbReference>
<dbReference type="GO" id="GO:0006412">
    <property type="term" value="P:translation"/>
    <property type="evidence" value="ECO:0007669"/>
    <property type="project" value="UniProtKB-UniRule"/>
</dbReference>
<dbReference type="FunFam" id="3.100.10.10:FF:000005">
    <property type="entry name" value="50S ribosomal protein L15"/>
    <property type="match status" value="1"/>
</dbReference>
<dbReference type="Gene3D" id="3.100.10.10">
    <property type="match status" value="1"/>
</dbReference>
<dbReference type="HAMAP" id="MF_01341">
    <property type="entry name" value="Ribosomal_uL15"/>
    <property type="match status" value="1"/>
</dbReference>
<dbReference type="InterPro" id="IPR030878">
    <property type="entry name" value="Ribosomal_uL15"/>
</dbReference>
<dbReference type="InterPro" id="IPR021131">
    <property type="entry name" value="Ribosomal_uL15/eL18"/>
</dbReference>
<dbReference type="InterPro" id="IPR036227">
    <property type="entry name" value="Ribosomal_uL15/eL18_sf"/>
</dbReference>
<dbReference type="InterPro" id="IPR005749">
    <property type="entry name" value="Ribosomal_uL15_bac-type"/>
</dbReference>
<dbReference type="InterPro" id="IPR001196">
    <property type="entry name" value="Ribosomal_uL15_CS"/>
</dbReference>
<dbReference type="NCBIfam" id="TIGR01071">
    <property type="entry name" value="rplO_bact"/>
    <property type="match status" value="1"/>
</dbReference>
<dbReference type="PANTHER" id="PTHR12934">
    <property type="entry name" value="50S RIBOSOMAL PROTEIN L15"/>
    <property type="match status" value="1"/>
</dbReference>
<dbReference type="PANTHER" id="PTHR12934:SF11">
    <property type="entry name" value="LARGE RIBOSOMAL SUBUNIT PROTEIN UL15M"/>
    <property type="match status" value="1"/>
</dbReference>
<dbReference type="Pfam" id="PF00828">
    <property type="entry name" value="Ribosomal_L27A"/>
    <property type="match status" value="1"/>
</dbReference>
<dbReference type="SUPFAM" id="SSF52080">
    <property type="entry name" value="Ribosomal proteins L15p and L18e"/>
    <property type="match status" value="1"/>
</dbReference>
<dbReference type="PROSITE" id="PS00475">
    <property type="entry name" value="RIBOSOMAL_L15"/>
    <property type="match status" value="1"/>
</dbReference>
<gene>
    <name evidence="1" type="primary">rplO</name>
    <name type="ordered locus">MRA_0731</name>
</gene>
<proteinExistence type="evidence at protein level"/>
<accession>A5U0A9</accession>
<keyword id="KW-0002">3D-structure</keyword>
<keyword id="KW-1185">Reference proteome</keyword>
<keyword id="KW-0687">Ribonucleoprotein</keyword>
<keyword id="KW-0689">Ribosomal protein</keyword>
<keyword id="KW-0694">RNA-binding</keyword>
<keyword id="KW-0699">rRNA-binding</keyword>
<protein>
    <recommendedName>
        <fullName evidence="1">Large ribosomal subunit protein uL15</fullName>
    </recommendedName>
    <alternativeName>
        <fullName evidence="3">50S ribosomal protein L15</fullName>
    </alternativeName>
</protein>
<evidence type="ECO:0000255" key="1">
    <source>
        <dbReference type="HAMAP-Rule" id="MF_01341"/>
    </source>
</evidence>
<evidence type="ECO:0000256" key="2">
    <source>
        <dbReference type="SAM" id="MobiDB-lite"/>
    </source>
</evidence>
<evidence type="ECO:0000305" key="3"/>
<evidence type="ECO:0007829" key="4">
    <source>
        <dbReference type="PDB" id="7F0D"/>
    </source>
</evidence>
<feature type="chain" id="PRO_1000054498" description="Large ribosomal subunit protein uL15">
    <location>
        <begin position="1"/>
        <end position="146"/>
    </location>
</feature>
<feature type="region of interest" description="Disordered" evidence="2">
    <location>
        <begin position="1"/>
        <end position="41"/>
    </location>
</feature>
<feature type="compositionally biased region" description="Basic and acidic residues" evidence="2">
    <location>
        <begin position="1"/>
        <end position="10"/>
    </location>
</feature>
<feature type="turn" evidence="4">
    <location>
        <begin position="25"/>
        <end position="33"/>
    </location>
</feature>
<feature type="strand" evidence="4">
    <location>
        <begin position="36"/>
        <end position="39"/>
    </location>
</feature>
<feature type="turn" evidence="4">
    <location>
        <begin position="40"/>
        <end position="42"/>
    </location>
</feature>
<feature type="strand" evidence="4">
    <location>
        <begin position="51"/>
        <end position="53"/>
    </location>
</feature>
<feature type="turn" evidence="4">
    <location>
        <begin position="56"/>
        <end position="58"/>
    </location>
</feature>
<feature type="strand" evidence="4">
    <location>
        <begin position="75"/>
        <end position="77"/>
    </location>
</feature>
<feature type="helix" evidence="4">
    <location>
        <begin position="79"/>
        <end position="83"/>
    </location>
</feature>
<feature type="helix" evidence="4">
    <location>
        <begin position="94"/>
        <end position="100"/>
    </location>
</feature>
<feature type="strand" evidence="4">
    <location>
        <begin position="109"/>
        <end position="111"/>
    </location>
</feature>
<feature type="strand" evidence="4">
    <location>
        <begin position="126"/>
        <end position="128"/>
    </location>
</feature>
<feature type="helix" evidence="4">
    <location>
        <begin position="130"/>
        <end position="138"/>
    </location>
</feature>
<feature type="strand" evidence="4">
    <location>
        <begin position="139"/>
        <end position="141"/>
    </location>
</feature>
<comment type="function">
    <text evidence="1">Binds to the 23S rRNA.</text>
</comment>
<comment type="subunit">
    <text evidence="1">Part of the 50S ribosomal subunit.</text>
</comment>
<comment type="similarity">
    <text evidence="1">Belongs to the universal ribosomal protein uL15 family.</text>
</comment>
<sequence>MTLKLHDLRPARGSKIARTRVGRGDGSKGKTAGRGTKGTRARKQVPVTFEGGQMPIHMRLPKLKGFRNRFRTEYEIVNVGDINRLFPQGGAVGVDDLVAKGAVRKNALVKVLGDGKLTAKVDVSAHKFSGSARAKITAAGGSATEL</sequence>
<reference key="1">
    <citation type="journal article" date="2008" name="PLoS ONE">
        <title>Genetic basis of virulence attenuation revealed by comparative genomic analysis of Mycobacterium tuberculosis strain H37Ra versus H37Rv.</title>
        <authorList>
            <person name="Zheng H."/>
            <person name="Lu L."/>
            <person name="Wang B."/>
            <person name="Pu S."/>
            <person name="Zhang X."/>
            <person name="Zhu G."/>
            <person name="Shi W."/>
            <person name="Zhang L."/>
            <person name="Wang H."/>
            <person name="Wang S."/>
            <person name="Zhao G."/>
            <person name="Zhang Y."/>
        </authorList>
    </citation>
    <scope>NUCLEOTIDE SEQUENCE [LARGE SCALE GENOMIC DNA]</scope>
    <source>
        <strain>ATCC 25177 / H37Ra</strain>
    </source>
</reference>